<keyword id="KW-0878">Amphibian defense peptide</keyword>
<keyword id="KW-0044">Antibiotic</keyword>
<keyword id="KW-0929">Antimicrobial</keyword>
<keyword id="KW-0903">Direct protein sequencing</keyword>
<keyword id="KW-1015">Disulfide bond</keyword>
<keyword id="KW-0395">Inflammatory response</keyword>
<keyword id="KW-0467">Mast cell degranulation</keyword>
<keyword id="KW-0964">Secreted</keyword>
<sequence length="37" mass="3840">GFFSLIKGVAKIATKGLAKNLGKMGLDLVGCKISKEC</sequence>
<protein>
    <recommendedName>
        <fullName evidence="4">Esculentin-2SE</fullName>
    </recommendedName>
</protein>
<reference evidence="5" key="1">
    <citation type="journal article" date="2006" name="Peptides">
        <title>Histamine-releasing and antimicrobial peptides from the skin secretions of the dusky gopher frog, Rana sevosa.</title>
        <authorList>
            <person name="Graham C."/>
            <person name="Richter S.C."/>
            <person name="McClean S."/>
            <person name="O'Kane E."/>
            <person name="Flatt P.R."/>
            <person name="Shaw C."/>
        </authorList>
    </citation>
    <scope>PROTEIN SEQUENCE</scope>
    <scope>FUNCTION</scope>
    <scope>SUBCELLULAR LOCATION</scope>
    <scope>TISSUE SPECIFICITY</scope>
    <scope>MASS SPECTROMETRY</scope>
    <source>
        <tissue evidence="3">Skin secretion</tissue>
    </source>
</reference>
<feature type="peptide" id="PRO_0000271246" description="Esculentin-2SE" evidence="3">
    <location>
        <begin position="1"/>
        <end position="37"/>
    </location>
</feature>
<feature type="disulfide bond" evidence="1">
    <location>
        <begin position="31"/>
        <end position="37"/>
    </location>
</feature>
<proteinExistence type="evidence at protein level"/>
<dbReference type="SMR" id="P85055"/>
<dbReference type="GO" id="GO:0005576">
    <property type="term" value="C:extracellular region"/>
    <property type="evidence" value="ECO:0000314"/>
    <property type="project" value="UniProtKB"/>
</dbReference>
<dbReference type="GO" id="GO:0050829">
    <property type="term" value="P:defense response to Gram-negative bacterium"/>
    <property type="evidence" value="ECO:0000314"/>
    <property type="project" value="UniProtKB"/>
</dbReference>
<dbReference type="GO" id="GO:0050830">
    <property type="term" value="P:defense response to Gram-positive bacterium"/>
    <property type="evidence" value="ECO:0000314"/>
    <property type="project" value="UniProtKB"/>
</dbReference>
<dbReference type="GO" id="GO:0002553">
    <property type="term" value="P:histamine secretion by mast cell"/>
    <property type="evidence" value="ECO:0000314"/>
    <property type="project" value="UniProtKB"/>
</dbReference>
<dbReference type="GO" id="GO:0043306">
    <property type="term" value="P:positive regulation of mast cell degranulation"/>
    <property type="evidence" value="ECO:0000314"/>
    <property type="project" value="UniProtKB"/>
</dbReference>
<dbReference type="InterPro" id="IPR012521">
    <property type="entry name" value="Antimicrobial_frog_2"/>
</dbReference>
<dbReference type="Pfam" id="PF08023">
    <property type="entry name" value="Antimicrobial_2"/>
    <property type="match status" value="1"/>
</dbReference>
<evidence type="ECO:0000250" key="1">
    <source>
        <dbReference type="UniProtKB" id="P40806"/>
    </source>
</evidence>
<evidence type="ECO:0000255" key="2"/>
<evidence type="ECO:0000269" key="3">
    <source>
    </source>
</evidence>
<evidence type="ECO:0000303" key="4">
    <source>
    </source>
</evidence>
<evidence type="ECO:0000305" key="5"/>
<organism>
    <name type="scientific">Lithobates sevosus</name>
    <name type="common">Dusky gopher frog</name>
    <name type="synonym">Rana sevosa</name>
    <dbReference type="NCBI Taxonomy" id="299683"/>
    <lineage>
        <taxon>Eukaryota</taxon>
        <taxon>Metazoa</taxon>
        <taxon>Chordata</taxon>
        <taxon>Craniata</taxon>
        <taxon>Vertebrata</taxon>
        <taxon>Euteleostomi</taxon>
        <taxon>Amphibia</taxon>
        <taxon>Batrachia</taxon>
        <taxon>Anura</taxon>
        <taxon>Neobatrachia</taxon>
        <taxon>Ranoidea</taxon>
        <taxon>Ranidae</taxon>
        <taxon>Lithobates</taxon>
    </lineage>
</organism>
<accession>P85055</accession>
<name>ES2SE_LITSE</name>
<comment type="function">
    <text evidence="3">Mast cell degranulating peptide. Causes histamine release from rat peritoneal mast cells in vitro. Has antibacterial activity against the Gram-negative bacterium E.coli K12 and Gram-positive bacterium M.luteus NCT C2665.</text>
</comment>
<comment type="subcellular location">
    <subcellularLocation>
        <location evidence="3">Secreted</location>
    </subcellularLocation>
</comment>
<comment type="tissue specificity">
    <text evidence="3">Expressed by the skin glands.</text>
</comment>
<comment type="mass spectrometry" mass="3837.0" method="MALDI" evidence="3"/>
<comment type="mass spectrometry" mass="3837.0" method="Electrospray" evidence="3"/>
<comment type="similarity">
    <text evidence="2">Belongs to the frog skin active peptide (FSAP) family. Esculentin subfamily.</text>
</comment>
<comment type="online information" name="The antimicrobial peptide database">
    <link uri="https://wangapd3.com/database/query_output.php?ID=01504"/>
</comment>